<accession>Q9ULM6</accession>
<accession>A7MD46</accession>
<accession>D3DWR0</accession>
<dbReference type="EC" id="3.1.13.4" evidence="4 9"/>
<dbReference type="EMBL" id="AB033020">
    <property type="protein sequence ID" value="BAA86508.1"/>
    <property type="molecule type" value="mRNA"/>
</dbReference>
<dbReference type="EMBL" id="CH471165">
    <property type="protein sequence ID" value="EAW53752.1"/>
    <property type="molecule type" value="Genomic_DNA"/>
</dbReference>
<dbReference type="EMBL" id="CH471165">
    <property type="protein sequence ID" value="EAW53753.1"/>
    <property type="molecule type" value="Genomic_DNA"/>
</dbReference>
<dbReference type="EMBL" id="BC152469">
    <property type="protein sequence ID" value="AAI52470.1"/>
    <property type="molecule type" value="mRNA"/>
</dbReference>
<dbReference type="CCDS" id="CCDS4455.1"/>
<dbReference type="RefSeq" id="NP_001290170.1">
    <property type="nucleotide sequence ID" value="NM_001303241.1"/>
</dbReference>
<dbReference type="RefSeq" id="NP_001357401.1">
    <property type="nucleotide sequence ID" value="NM_001370472.1"/>
</dbReference>
<dbReference type="RefSeq" id="XP_005266010.1">
    <property type="nucleotide sequence ID" value="XM_005265953.1"/>
</dbReference>
<dbReference type="RefSeq" id="XP_011532908.1">
    <property type="nucleotide sequence ID" value="XM_011534606.1"/>
</dbReference>
<dbReference type="RefSeq" id="XP_011532909.1">
    <property type="nucleotide sequence ID" value="XM_011534607.1"/>
</dbReference>
<dbReference type="RefSeq" id="XP_047273392.1">
    <property type="nucleotide sequence ID" value="XM_047417436.1"/>
</dbReference>
<dbReference type="RefSeq" id="XP_054208966.1">
    <property type="nucleotide sequence ID" value="XM_054352991.1"/>
</dbReference>
<dbReference type="PDB" id="7AX1">
    <property type="method" value="X-ray"/>
    <property type="resolution" value="3.30 A"/>
    <property type="chains" value="A=1-557"/>
</dbReference>
<dbReference type="PDBsum" id="7AX1"/>
<dbReference type="SMR" id="Q9ULM6"/>
<dbReference type="BioGRID" id="121542">
    <property type="interactions" value="62"/>
</dbReference>
<dbReference type="ComplexPortal" id="CPX-2849">
    <property type="entry name" value="CCR4-NOT mRNA deadenylase complex, CNOT6-CNOT8 variant"/>
</dbReference>
<dbReference type="ComplexPortal" id="CPX-707">
    <property type="entry name" value="CCR4-NOT mRNA deadenylase complex, CNOT6-CNOT7 variant"/>
</dbReference>
<dbReference type="CORUM" id="Q9ULM6"/>
<dbReference type="DIP" id="DIP-46838N"/>
<dbReference type="FunCoup" id="Q9ULM6">
    <property type="interactions" value="3032"/>
</dbReference>
<dbReference type="IntAct" id="Q9ULM6">
    <property type="interactions" value="42"/>
</dbReference>
<dbReference type="STRING" id="9606.ENSP00000481893"/>
<dbReference type="ChEMBL" id="CHEMBL3616363"/>
<dbReference type="GlyGen" id="Q9ULM6">
    <property type="glycosylation" value="1 site, 1 O-linked glycan (1 site)"/>
</dbReference>
<dbReference type="iPTMnet" id="Q9ULM6"/>
<dbReference type="PhosphoSitePlus" id="Q9ULM6"/>
<dbReference type="BioMuta" id="CNOT6"/>
<dbReference type="DMDM" id="46396033"/>
<dbReference type="jPOST" id="Q9ULM6"/>
<dbReference type="MassIVE" id="Q9ULM6"/>
<dbReference type="PaxDb" id="9606-ENSP00000377024"/>
<dbReference type="PeptideAtlas" id="Q9ULM6"/>
<dbReference type="ProteomicsDB" id="85079"/>
<dbReference type="Pumba" id="Q9ULM6"/>
<dbReference type="Antibodypedia" id="29603">
    <property type="antibodies" value="146 antibodies from 22 providers"/>
</dbReference>
<dbReference type="DNASU" id="57472"/>
<dbReference type="Ensembl" id="ENST00000261951.9">
    <property type="protein sequence ID" value="ENSP00000261951.4"/>
    <property type="gene ID" value="ENSG00000113300.13"/>
</dbReference>
<dbReference type="Ensembl" id="ENST00000393356.7">
    <property type="protein sequence ID" value="ENSP00000377024.1"/>
    <property type="gene ID" value="ENSG00000113300.13"/>
</dbReference>
<dbReference type="Ensembl" id="ENST00000618123.4">
    <property type="protein sequence ID" value="ENSP00000481893.1"/>
    <property type="gene ID" value="ENSG00000113300.13"/>
</dbReference>
<dbReference type="GeneID" id="57472"/>
<dbReference type="MANE-Select" id="ENST00000261951.9">
    <property type="protein sequence ID" value="ENSP00000261951.4"/>
    <property type="RefSeq nucleotide sequence ID" value="NM_001370472.1"/>
    <property type="RefSeq protein sequence ID" value="NP_001357401.1"/>
</dbReference>
<dbReference type="UCSC" id="uc003mlx.3">
    <property type="organism name" value="human"/>
</dbReference>
<dbReference type="AGR" id="HGNC:14099"/>
<dbReference type="GeneCards" id="CNOT6"/>
<dbReference type="HGNC" id="HGNC:14099">
    <property type="gene designation" value="CNOT6"/>
</dbReference>
<dbReference type="HPA" id="ENSG00000113300">
    <property type="expression patterns" value="Low tissue specificity"/>
</dbReference>
<dbReference type="MIM" id="608951">
    <property type="type" value="gene"/>
</dbReference>
<dbReference type="neXtProt" id="NX_Q9ULM6"/>
<dbReference type="OpenTargets" id="ENSG00000113300"/>
<dbReference type="PharmGKB" id="PA26677"/>
<dbReference type="VEuPathDB" id="HostDB:ENSG00000113300"/>
<dbReference type="eggNOG" id="KOG0620">
    <property type="taxonomic scope" value="Eukaryota"/>
</dbReference>
<dbReference type="GeneTree" id="ENSGT00940000158978"/>
<dbReference type="HOGENOM" id="CLU_016428_4_2_1"/>
<dbReference type="InParanoid" id="Q9ULM6"/>
<dbReference type="OMA" id="EHRMVAP"/>
<dbReference type="OrthoDB" id="428734at2759"/>
<dbReference type="PAN-GO" id="Q9ULM6">
    <property type="GO annotations" value="5 GO annotations based on evolutionary models"/>
</dbReference>
<dbReference type="PhylomeDB" id="Q9ULM6"/>
<dbReference type="TreeFam" id="TF323175"/>
<dbReference type="PathwayCommons" id="Q9ULM6"/>
<dbReference type="Reactome" id="R-HSA-429947">
    <property type="pathway name" value="Deadenylation of mRNA"/>
</dbReference>
<dbReference type="Reactome" id="R-HSA-5617472">
    <property type="pathway name" value="Activation of anterior HOX genes in hindbrain development during early embryogenesis"/>
</dbReference>
<dbReference type="Reactome" id="R-HSA-6804115">
    <property type="pathway name" value="TP53 regulates transcription of additional cell cycle genes whose exact role in the p53 pathway remain uncertain"/>
</dbReference>
<dbReference type="Reactome" id="R-HSA-9820841">
    <property type="pathway name" value="M-decay: degradation of maternal mRNAs by maternally stored factors"/>
</dbReference>
<dbReference type="SignaLink" id="Q9ULM6"/>
<dbReference type="SIGNOR" id="Q9ULM6"/>
<dbReference type="BioGRID-ORCS" id="57472">
    <property type="hits" value="21 hits in 1159 CRISPR screens"/>
</dbReference>
<dbReference type="CD-CODE" id="232F8A39">
    <property type="entry name" value="P-body"/>
</dbReference>
<dbReference type="CD-CODE" id="DEE660B4">
    <property type="entry name" value="Stress granule"/>
</dbReference>
<dbReference type="ChiTaRS" id="CNOT6">
    <property type="organism name" value="human"/>
</dbReference>
<dbReference type="GeneWiki" id="CNOT6"/>
<dbReference type="GenomeRNAi" id="57472"/>
<dbReference type="Pharos" id="Q9ULM6">
    <property type="development level" value="Tbio"/>
</dbReference>
<dbReference type="PRO" id="PR:Q9ULM6"/>
<dbReference type="Proteomes" id="UP000005640">
    <property type="component" value="Chromosome 5"/>
</dbReference>
<dbReference type="RNAct" id="Q9ULM6">
    <property type="molecule type" value="protein"/>
</dbReference>
<dbReference type="Bgee" id="ENSG00000113300">
    <property type="expression patterns" value="Expressed in secondary oocyte and 202 other cell types or tissues"/>
</dbReference>
<dbReference type="ExpressionAtlas" id="Q9ULM6">
    <property type="expression patterns" value="baseline and differential"/>
</dbReference>
<dbReference type="GO" id="GO:0030014">
    <property type="term" value="C:CCR4-NOT complex"/>
    <property type="evidence" value="ECO:0000314"/>
    <property type="project" value="UniProtKB"/>
</dbReference>
<dbReference type="GO" id="GO:0005829">
    <property type="term" value="C:cytosol"/>
    <property type="evidence" value="ECO:0000304"/>
    <property type="project" value="Reactome"/>
</dbReference>
<dbReference type="GO" id="GO:0016020">
    <property type="term" value="C:membrane"/>
    <property type="evidence" value="ECO:0007005"/>
    <property type="project" value="UniProtKB"/>
</dbReference>
<dbReference type="GO" id="GO:0005634">
    <property type="term" value="C:nucleus"/>
    <property type="evidence" value="ECO:0007669"/>
    <property type="project" value="UniProtKB-SubCell"/>
</dbReference>
<dbReference type="GO" id="GO:0000175">
    <property type="term" value="F:3'-5'-RNA exonuclease activity"/>
    <property type="evidence" value="ECO:0000318"/>
    <property type="project" value="GO_Central"/>
</dbReference>
<dbReference type="GO" id="GO:0046872">
    <property type="term" value="F:metal ion binding"/>
    <property type="evidence" value="ECO:0007669"/>
    <property type="project" value="UniProtKB-KW"/>
</dbReference>
<dbReference type="GO" id="GO:0004535">
    <property type="term" value="F:poly(A)-specific ribonuclease activity"/>
    <property type="evidence" value="ECO:0000314"/>
    <property type="project" value="UniProtKB"/>
</dbReference>
<dbReference type="GO" id="GO:0003723">
    <property type="term" value="F:RNA binding"/>
    <property type="evidence" value="ECO:0007669"/>
    <property type="project" value="UniProtKB-KW"/>
</dbReference>
<dbReference type="GO" id="GO:0004532">
    <property type="term" value="F:RNA exonuclease activity"/>
    <property type="evidence" value="ECO:0000314"/>
    <property type="project" value="UniProtKB"/>
</dbReference>
<dbReference type="GO" id="GO:0003713">
    <property type="term" value="F:transcription coactivator activity"/>
    <property type="evidence" value="ECO:0000314"/>
    <property type="project" value="GO_Central"/>
</dbReference>
<dbReference type="GO" id="GO:0035279">
    <property type="term" value="P:miRNA-mediated gene silencing by mRNA destabilization"/>
    <property type="evidence" value="ECO:0000314"/>
    <property type="project" value="UniProtKB"/>
</dbReference>
<dbReference type="GO" id="GO:0070966">
    <property type="term" value="P:nuclear-transcribed mRNA catabolic process, no-go decay"/>
    <property type="evidence" value="ECO:0000315"/>
    <property type="project" value="UniProtKB"/>
</dbReference>
<dbReference type="GO" id="GO:0000289">
    <property type="term" value="P:nuclear-transcribed mRNA poly(A) tail shortening"/>
    <property type="evidence" value="ECO:0000315"/>
    <property type="project" value="UniProtKB"/>
</dbReference>
<dbReference type="GO" id="GO:0008284">
    <property type="term" value="P:positive regulation of cell population proliferation"/>
    <property type="evidence" value="ECO:0000315"/>
    <property type="project" value="UniProtKB"/>
</dbReference>
<dbReference type="GO" id="GO:0010606">
    <property type="term" value="P:positive regulation of cytoplasmic mRNA processing body assembly"/>
    <property type="evidence" value="ECO:0000315"/>
    <property type="project" value="UniProtKB"/>
</dbReference>
<dbReference type="GO" id="GO:0006417">
    <property type="term" value="P:regulation of translation"/>
    <property type="evidence" value="ECO:0007669"/>
    <property type="project" value="UniProtKB-KW"/>
</dbReference>
<dbReference type="CDD" id="cd10313">
    <property type="entry name" value="Deadenylase_CCR4a"/>
    <property type="match status" value="1"/>
</dbReference>
<dbReference type="FunFam" id="3.60.10.10:FF:000002">
    <property type="entry name" value="CCR4-NOT transcription complex subunit 6 like"/>
    <property type="match status" value="1"/>
</dbReference>
<dbReference type="FunFam" id="3.80.10.10:FF:000008">
    <property type="entry name" value="CCR4-NOT transcription complex subunit 6 like"/>
    <property type="match status" value="1"/>
</dbReference>
<dbReference type="Gene3D" id="3.60.10.10">
    <property type="entry name" value="Endonuclease/exonuclease/phosphatase"/>
    <property type="match status" value="1"/>
</dbReference>
<dbReference type="Gene3D" id="3.80.10.10">
    <property type="entry name" value="Ribonuclease Inhibitor"/>
    <property type="match status" value="1"/>
</dbReference>
<dbReference type="InterPro" id="IPR050410">
    <property type="entry name" value="CCR4/nocturin_mRNA_transcr"/>
</dbReference>
<dbReference type="InterPro" id="IPR034966">
    <property type="entry name" value="Cnot6"/>
</dbReference>
<dbReference type="InterPro" id="IPR036691">
    <property type="entry name" value="Endo/exonu/phosph_ase_sf"/>
</dbReference>
<dbReference type="InterPro" id="IPR005135">
    <property type="entry name" value="Endo/exonuclease/phosphatase"/>
</dbReference>
<dbReference type="InterPro" id="IPR001611">
    <property type="entry name" value="Leu-rich_rpt"/>
</dbReference>
<dbReference type="InterPro" id="IPR003591">
    <property type="entry name" value="Leu-rich_rpt_typical-subtyp"/>
</dbReference>
<dbReference type="InterPro" id="IPR032675">
    <property type="entry name" value="LRR_dom_sf"/>
</dbReference>
<dbReference type="PANTHER" id="PTHR12121">
    <property type="entry name" value="CARBON CATABOLITE REPRESSOR PROTEIN 4"/>
    <property type="match status" value="1"/>
</dbReference>
<dbReference type="PANTHER" id="PTHR12121:SF33">
    <property type="entry name" value="CCR4-NOT TRANSCRIPTION COMPLEX SUBUNIT 6"/>
    <property type="match status" value="1"/>
</dbReference>
<dbReference type="Pfam" id="PF03372">
    <property type="entry name" value="Exo_endo_phos"/>
    <property type="match status" value="1"/>
</dbReference>
<dbReference type="Pfam" id="PF13855">
    <property type="entry name" value="LRR_8"/>
    <property type="match status" value="1"/>
</dbReference>
<dbReference type="SMART" id="SM00369">
    <property type="entry name" value="LRR_TYP"/>
    <property type="match status" value="3"/>
</dbReference>
<dbReference type="SUPFAM" id="SSF56219">
    <property type="entry name" value="DNase I-like"/>
    <property type="match status" value="1"/>
</dbReference>
<dbReference type="SUPFAM" id="SSF52058">
    <property type="entry name" value="L domain-like"/>
    <property type="match status" value="1"/>
</dbReference>
<dbReference type="PROSITE" id="PS51450">
    <property type="entry name" value="LRR"/>
    <property type="match status" value="4"/>
</dbReference>
<reference key="1">
    <citation type="journal article" date="1999" name="DNA Res.">
        <title>Prediction of the coding sequences of unidentified human genes. XV. The complete sequences of 100 new cDNA clones from brain which code for large proteins in vitro.</title>
        <authorList>
            <person name="Nagase T."/>
            <person name="Ishikawa K."/>
            <person name="Kikuno R."/>
            <person name="Hirosawa M."/>
            <person name="Nomura N."/>
            <person name="Ohara O."/>
        </authorList>
    </citation>
    <scope>NUCLEOTIDE SEQUENCE [LARGE SCALE MRNA]</scope>
    <source>
        <tissue>Brain</tissue>
    </source>
</reference>
<reference key="2">
    <citation type="submission" date="2005-09" db="EMBL/GenBank/DDBJ databases">
        <authorList>
            <person name="Mural R.J."/>
            <person name="Istrail S."/>
            <person name="Sutton G.G."/>
            <person name="Florea L."/>
            <person name="Halpern A.L."/>
            <person name="Mobarry C.M."/>
            <person name="Lippert R."/>
            <person name="Walenz B."/>
            <person name="Shatkay H."/>
            <person name="Dew I."/>
            <person name="Miller J.R."/>
            <person name="Flanigan M.J."/>
            <person name="Edwards N.J."/>
            <person name="Bolanos R."/>
            <person name="Fasulo D."/>
            <person name="Halldorsson B.V."/>
            <person name="Hannenhalli S."/>
            <person name="Turner R."/>
            <person name="Yooseph S."/>
            <person name="Lu F."/>
            <person name="Nusskern D.R."/>
            <person name="Shue B.C."/>
            <person name="Zheng X.H."/>
            <person name="Zhong F."/>
            <person name="Delcher A.L."/>
            <person name="Huson D.H."/>
            <person name="Kravitz S.A."/>
            <person name="Mouchard L."/>
            <person name="Reinert K."/>
            <person name="Remington K.A."/>
            <person name="Clark A.G."/>
            <person name="Waterman M.S."/>
            <person name="Eichler E.E."/>
            <person name="Adams M.D."/>
            <person name="Hunkapiller M.W."/>
            <person name="Myers E.W."/>
            <person name="Venter J.C."/>
        </authorList>
    </citation>
    <scope>NUCLEOTIDE SEQUENCE [LARGE SCALE GENOMIC DNA]</scope>
</reference>
<reference key="3">
    <citation type="journal article" date="2004" name="Genome Res.">
        <title>The status, quality, and expansion of the NIH full-length cDNA project: the Mammalian Gene Collection (MGC).</title>
        <authorList>
            <consortium name="The MGC Project Team"/>
        </authorList>
    </citation>
    <scope>NUCLEOTIDE SEQUENCE [LARGE SCALE MRNA]</scope>
</reference>
<reference key="4">
    <citation type="journal article" date="2001" name="BMC Genomics">
        <title>Identification of four families of yCCR4- and Mg2+-dependent endonuclease-related proteins in higher eukaryotes, and characterization of orthologs of yCCR4 with a conserved leucine-rich repeat essential for hCAF1/hPOP2 binding.</title>
        <authorList>
            <person name="Dupressoir A."/>
            <person name="Morel A.-P."/>
            <person name="Barbot W."/>
            <person name="Loireau M.-P."/>
            <person name="Corbo L."/>
            <person name="Heidmann T."/>
        </authorList>
    </citation>
    <scope>INTERACTION WITH CNOT7 AND CNOT8</scope>
</reference>
<reference key="5">
    <citation type="journal article" date="2002" name="EMBO J.">
        <title>CCR4, a 3'-5' poly(A) RNA and ssDNA exonuclease, is the catalytic component of the cytoplasmic deadenylase.</title>
        <authorList>
            <person name="Chen J."/>
            <person name="Chiang Y.-C."/>
            <person name="Denis C.L."/>
        </authorList>
    </citation>
    <scope>FUNCTION</scope>
    <scope>CATALYTIC ACTIVITY</scope>
</reference>
<reference key="6">
    <citation type="journal article" date="2004" name="Genes Dev.">
        <title>UNR, a new partner of poly(A)-binding protein, plays a key role in translationally coupled mRNA turnover mediated by the c-fos major coding-region determinant.</title>
        <authorList>
            <person name="Chang T.-C."/>
            <person name="Yamashita A."/>
            <person name="Chen C.-Y.A."/>
            <person name="Yamashita Y."/>
            <person name="Zhu W."/>
            <person name="Durdan S."/>
            <person name="Kahvejian A."/>
            <person name="Sonenberg N."/>
            <person name="Shyu A.-B."/>
        </authorList>
    </citation>
    <scope>INTERACTION WITH UNR</scope>
</reference>
<reference key="7">
    <citation type="journal article" date="2005" name="Genes Dev.">
        <title>Recruitment and activation of mRNA decay enzymes by two ARE-mediated decay activation domains in the proteins TTP and BRF-1.</title>
        <authorList>
            <person name="Lykke-Andersen J."/>
            <person name="Wagner E."/>
        </authorList>
    </citation>
    <scope>INTERACTION WITH ZFP36L1</scope>
</reference>
<reference key="8">
    <citation type="journal article" date="2008" name="J. Biol. Chem.">
        <title>Components of the CCR4-NOT complex function as nuclear hormone receptor coactivators via association with the NRC-interacting Factor NIF-1.</title>
        <authorList>
            <person name="Garapaty S."/>
            <person name="Mahajan M.A."/>
            <person name="Samuels H.H."/>
        </authorList>
    </citation>
    <scope>FUNCTION</scope>
    <scope>INTERACTION WITH ZNF335</scope>
</reference>
<reference key="9">
    <citation type="journal article" date="2009" name="Biochem. J.">
        <title>Human Ccr4-Not complexes contain variable deadenylase subunits.</title>
        <authorList>
            <person name="Lau N.C."/>
            <person name="Kolkman A."/>
            <person name="van Schaik F.M."/>
            <person name="Mulder K.W."/>
            <person name="Pijnappel W.W."/>
            <person name="Heck A.J."/>
            <person name="Timmers H.T."/>
        </authorList>
    </citation>
    <scope>IDENTIFICATION IN THE CCR4-NOT COMPLEX</scope>
    <scope>COMPOSITION OF THE CCR4-NOT COMPLEX</scope>
</reference>
<reference key="10">
    <citation type="journal article" date="2010" name="Mol. Cell. Biol.">
        <title>CCR4-NOT deadenylates mRNA associated with complexes in human cells.</title>
        <authorList>
            <person name="Piao X."/>
            <person name="Zhang X."/>
            <person name="Wu L."/>
            <person name="Belasco J.G."/>
        </authorList>
    </citation>
    <scope>FUNCTION</scope>
    <scope>CATALYTIC ACTIVITY</scope>
    <scope>MUTAGENESIS OF GLU-240</scope>
</reference>
<reference key="11">
    <citation type="journal article" date="2011" name="Mol. Biol. Cell">
        <title>The Ccr4a (CNOT6) and Ccr4b (CNOT6L) deadenylase subunits of the human Ccr4-Not complex contribute to the prevention of cell death and senescence.</title>
        <authorList>
            <person name="Mittal S."/>
            <person name="Aslam A."/>
            <person name="Doidge R."/>
            <person name="Medica R."/>
            <person name="Winkler G.S."/>
        </authorList>
    </citation>
    <scope>FUNCTION</scope>
</reference>
<keyword id="KW-0002">3D-structure</keyword>
<keyword id="KW-0010">Activator</keyword>
<keyword id="KW-0963">Cytoplasm</keyword>
<keyword id="KW-0269">Exonuclease</keyword>
<keyword id="KW-0378">Hydrolase</keyword>
<keyword id="KW-0433">Leucine-rich repeat</keyword>
<keyword id="KW-0460">Magnesium</keyword>
<keyword id="KW-0479">Metal-binding</keyword>
<keyword id="KW-0540">Nuclease</keyword>
<keyword id="KW-0539">Nucleus</keyword>
<keyword id="KW-1267">Proteomics identification</keyword>
<keyword id="KW-1185">Reference proteome</keyword>
<keyword id="KW-0677">Repeat</keyword>
<keyword id="KW-0694">RNA-binding</keyword>
<keyword id="KW-0943">RNA-mediated gene silencing</keyword>
<keyword id="KW-0804">Transcription</keyword>
<keyword id="KW-0805">Transcription regulation</keyword>
<keyword id="KW-0810">Translation regulation</keyword>
<name>CNOT6_HUMAN</name>
<evidence type="ECO:0000250" key="1"/>
<evidence type="ECO:0000250" key="2">
    <source>
        <dbReference type="UniProtKB" id="Q96LI5"/>
    </source>
</evidence>
<evidence type="ECO:0000269" key="3">
    <source>
    </source>
</evidence>
<evidence type="ECO:0000269" key="4">
    <source>
    </source>
</evidence>
<evidence type="ECO:0000269" key="5">
    <source>
    </source>
</evidence>
<evidence type="ECO:0000269" key="6">
    <source>
    </source>
</evidence>
<evidence type="ECO:0000269" key="7">
    <source>
    </source>
</evidence>
<evidence type="ECO:0000269" key="8">
    <source>
    </source>
</evidence>
<evidence type="ECO:0000269" key="9">
    <source>
    </source>
</evidence>
<evidence type="ECO:0000269" key="10">
    <source>
    </source>
</evidence>
<evidence type="ECO:0000305" key="11"/>
<evidence type="ECO:0007829" key="12">
    <source>
        <dbReference type="PDB" id="7AX1"/>
    </source>
</evidence>
<gene>
    <name type="primary">CNOT6</name>
    <name type="synonym">CCR4</name>
    <name type="synonym">CCR4a</name>
    <name type="synonym">KIAA1194</name>
</gene>
<protein>
    <recommendedName>
        <fullName>CCR4-NOT transcription complex subunit 6</fullName>
        <ecNumber evidence="4 9">3.1.13.4</ecNumber>
    </recommendedName>
    <alternativeName>
        <fullName>CCR4 carbon catabolite repression 4-like</fullName>
    </alternativeName>
    <alternativeName>
        <fullName>Carbon catabolite repressor protein 4 homolog</fullName>
    </alternativeName>
    <alternativeName>
        <fullName>Cytoplasmic deadenylase</fullName>
    </alternativeName>
</protein>
<feature type="chain" id="PRO_0000218573" description="CCR4-NOT transcription complex subunit 6">
    <location>
        <begin position="1"/>
        <end position="557"/>
    </location>
</feature>
<feature type="repeat" description="LRR 1">
    <location>
        <begin position="52"/>
        <end position="73"/>
    </location>
</feature>
<feature type="repeat" description="LRR 2">
    <location>
        <begin position="75"/>
        <end position="96"/>
    </location>
</feature>
<feature type="repeat" description="LRR 3">
    <location>
        <begin position="98"/>
        <end position="120"/>
    </location>
</feature>
<feature type="repeat" description="LRR 4">
    <location>
        <begin position="121"/>
        <end position="143"/>
    </location>
</feature>
<feature type="region of interest" description="Nuclease domain" evidence="1">
    <location>
        <begin position="153"/>
        <end position="557"/>
    </location>
</feature>
<feature type="active site" description="Proton donor/acceptor" evidence="2">
    <location>
        <position position="412"/>
    </location>
</feature>
<feature type="binding site" evidence="2">
    <location>
        <position position="240"/>
    </location>
    <ligand>
        <name>Mg(2+)</name>
        <dbReference type="ChEBI" id="CHEBI:18420"/>
        <label>1</label>
    </ligand>
</feature>
<feature type="binding site" evidence="2">
    <location>
        <position position="240"/>
    </location>
    <ligand>
        <name>substrate</name>
    </ligand>
</feature>
<feature type="binding site" evidence="2">
    <location>
        <position position="276"/>
    </location>
    <ligand>
        <name>substrate</name>
    </ligand>
</feature>
<feature type="binding site" evidence="2">
    <location>
        <position position="361"/>
    </location>
    <ligand>
        <name>substrate</name>
    </ligand>
</feature>
<feature type="binding site" evidence="2">
    <location>
        <position position="366"/>
    </location>
    <ligand>
        <name>substrate</name>
    </ligand>
</feature>
<feature type="binding site" evidence="2">
    <location>
        <position position="412"/>
    </location>
    <ligand>
        <name>Mg(2+)</name>
        <dbReference type="ChEBI" id="CHEBI:18420"/>
        <label>2</label>
    </ligand>
</feature>
<feature type="binding site" evidence="2">
    <location>
        <position position="414"/>
    </location>
    <ligand>
        <name>substrate</name>
    </ligand>
</feature>
<feature type="binding site" evidence="2">
    <location>
        <position position="481"/>
    </location>
    <ligand>
        <name>substrate</name>
    </ligand>
</feature>
<feature type="binding site" evidence="2">
    <location>
        <position position="486"/>
    </location>
    <ligand>
        <name>substrate</name>
    </ligand>
</feature>
<feature type="mutagenesis site" description="Impairs deadenylation and decay of mRNAi-targeted mRNA." evidence="9">
    <original>E</original>
    <variation>A</variation>
    <location>
        <position position="240"/>
    </location>
</feature>
<feature type="helix" evidence="12">
    <location>
        <begin position="19"/>
        <end position="25"/>
    </location>
</feature>
<feature type="strand" evidence="12">
    <location>
        <begin position="33"/>
        <end position="36"/>
    </location>
</feature>
<feature type="helix" evidence="12">
    <location>
        <begin position="45"/>
        <end position="47"/>
    </location>
</feature>
<feature type="strand" evidence="12">
    <location>
        <begin position="55"/>
        <end position="57"/>
    </location>
</feature>
<feature type="helix" evidence="12">
    <location>
        <begin position="68"/>
        <end position="72"/>
    </location>
</feature>
<feature type="helix" evidence="12">
    <location>
        <begin position="92"/>
        <end position="95"/>
    </location>
</feature>
<feature type="strand" evidence="12">
    <location>
        <begin position="101"/>
        <end position="103"/>
    </location>
</feature>
<feature type="helix" evidence="12">
    <location>
        <begin position="114"/>
        <end position="118"/>
    </location>
</feature>
<feature type="strand" evidence="12">
    <location>
        <begin position="124"/>
        <end position="126"/>
    </location>
</feature>
<feature type="helix" evidence="12">
    <location>
        <begin position="134"/>
        <end position="141"/>
    </location>
</feature>
<feature type="helix" evidence="12">
    <location>
        <begin position="145"/>
        <end position="160"/>
    </location>
</feature>
<feature type="strand" evidence="12">
    <location>
        <begin position="174"/>
        <end position="176"/>
    </location>
</feature>
<feature type="strand" evidence="12">
    <location>
        <begin position="186"/>
        <end position="195"/>
    </location>
</feature>
<feature type="turn" evidence="12">
    <location>
        <begin position="204"/>
        <end position="206"/>
    </location>
</feature>
<feature type="helix" evidence="12">
    <location>
        <begin position="212"/>
        <end position="215"/>
    </location>
</feature>
<feature type="helix" evidence="12">
    <location>
        <begin position="217"/>
        <end position="231"/>
    </location>
</feature>
<feature type="strand" evidence="12">
    <location>
        <begin position="234"/>
        <end position="240"/>
    </location>
</feature>
<feature type="helix" evidence="12">
    <location>
        <begin position="243"/>
        <end position="248"/>
    </location>
</feature>
<feature type="helix" evidence="12">
    <location>
        <begin position="250"/>
        <end position="255"/>
    </location>
</feature>
<feature type="turn" evidence="12">
    <location>
        <begin position="256"/>
        <end position="258"/>
    </location>
</feature>
<feature type="helix" evidence="12">
    <location>
        <begin position="274"/>
        <end position="278"/>
    </location>
</feature>
<feature type="strand" evidence="12">
    <location>
        <begin position="284"/>
        <end position="288"/>
    </location>
</feature>
<feature type="turn" evidence="12">
    <location>
        <begin position="289"/>
        <end position="291"/>
    </location>
</feature>
<feature type="strand" evidence="12">
    <location>
        <begin position="296"/>
        <end position="299"/>
    </location>
</feature>
<feature type="helix" evidence="12">
    <location>
        <begin position="311"/>
        <end position="320"/>
    </location>
</feature>
<feature type="strand" evidence="12">
    <location>
        <begin position="327"/>
        <end position="334"/>
    </location>
</feature>
<feature type="strand" evidence="12">
    <location>
        <begin position="354"/>
        <end position="361"/>
    </location>
</feature>
<feature type="helix" evidence="12">
    <location>
        <begin position="366"/>
        <end position="368"/>
    </location>
</feature>
<feature type="helix" evidence="12">
    <location>
        <begin position="369"/>
        <end position="393"/>
    </location>
</feature>
<feature type="strand" evidence="12">
    <location>
        <begin position="407"/>
        <end position="412"/>
    </location>
</feature>
<feature type="helix" evidence="12">
    <location>
        <begin position="420"/>
        <end position="426"/>
    </location>
</feature>
<feature type="strand" evidence="12">
    <location>
        <begin position="427"/>
        <end position="431"/>
    </location>
</feature>
<feature type="helix" evidence="12">
    <location>
        <begin position="435"/>
        <end position="440"/>
    </location>
</feature>
<feature type="helix" evidence="12">
    <location>
        <begin position="446"/>
        <end position="449"/>
    </location>
</feature>
<feature type="strand" evidence="12">
    <location>
        <begin position="461"/>
        <end position="463"/>
    </location>
</feature>
<feature type="turn" evidence="12">
    <location>
        <begin position="471"/>
        <end position="475"/>
    </location>
</feature>
<feature type="strand" evidence="12">
    <location>
        <begin position="476"/>
        <end position="478"/>
    </location>
</feature>
<feature type="strand" evidence="12">
    <location>
        <begin position="480"/>
        <end position="482"/>
    </location>
</feature>
<feature type="strand" evidence="12">
    <location>
        <begin position="491"/>
        <end position="496"/>
    </location>
</feature>
<feature type="turn" evidence="12">
    <location>
        <begin position="497"/>
        <end position="499"/>
    </location>
</feature>
<feature type="strand" evidence="12">
    <location>
        <begin position="500"/>
        <end position="506"/>
    </location>
</feature>
<feature type="helix" evidence="12">
    <location>
        <begin position="511"/>
        <end position="516"/>
    </location>
</feature>
<feature type="strand" evidence="12">
    <location>
        <begin position="521"/>
        <end position="524"/>
    </location>
</feature>
<feature type="strand" evidence="12">
    <location>
        <begin position="529"/>
        <end position="531"/>
    </location>
</feature>
<feature type="strand" evidence="12">
    <location>
        <begin position="536"/>
        <end position="541"/>
    </location>
</feature>
<organism>
    <name type="scientific">Homo sapiens</name>
    <name type="common">Human</name>
    <dbReference type="NCBI Taxonomy" id="9606"/>
    <lineage>
        <taxon>Eukaryota</taxon>
        <taxon>Metazoa</taxon>
        <taxon>Chordata</taxon>
        <taxon>Craniata</taxon>
        <taxon>Vertebrata</taxon>
        <taxon>Euteleostomi</taxon>
        <taxon>Mammalia</taxon>
        <taxon>Eutheria</taxon>
        <taxon>Euarchontoglires</taxon>
        <taxon>Primates</taxon>
        <taxon>Haplorrhini</taxon>
        <taxon>Catarrhini</taxon>
        <taxon>Hominidae</taxon>
        <taxon>Homo</taxon>
    </lineage>
</organism>
<proteinExistence type="evidence at protein level"/>
<sequence>MPKEKYEPPDPRRMYTIMSSEEAANGKKSHWAELEISGKVRSLSASLWSLTHLTALHLSDNSLSRIPSDIAKLHNLVYLDLSSNKIRSLPAELGNMVSLRELHLNNNLLRVLPFELGKLFQLQTLGLKGNPLTQDILNLYQEPDGTRRLLNYLLDNLSGTAKRITTEQPPPRSWIMLQEPDRTRPTALFSVMCYNVLCDKYATRQLYGYCPSWALNWDYRKKAIIQEILSCNADIVSLQEVETEQYYSFFLVELKERGYNGFFSPKSRARTMSEQERKHVDGCAIFFKTEKFTLVQKHTVEFNQLAMANSEGSEAMLNRVMTKDNIGVAVLLELRKESIEMPSGKPHLGTEKQLILVANAHMHWDPEYSDVKLVQTMMFLSEVKNIIDKASRNLKSSVLGEFGTIPLVLCADLNSLPDSGVVEYLSTGGVETNHKDFKELRYNESLTNFSCHGKNGTTNGRITHGFKLQSAYESGLMPYTNYTFDFKGIIDYIFYSKPQLNTLGILGPLDHHWLVENNISGCPHPLIPSDHFSLFAQLELLLPFLPQVNGIHLPGRR</sequence>
<comment type="function">
    <text evidence="4 7 9 10">Poly(A) nuclease with 3'-5' RNase activity. Catalytic component of the CCR4-NOT complex which is one of the major cellular mRNA deadenylases and is linked to various cellular processes including bulk mRNA degradation, miRNA-mediated repression, translational repression during translational initiation and general transcription regulation. Additional complex functions may be a consequence of its influence on mRNA expression. Involved in mRNA decay mediated by the major-protein-coding determinant of instability (mCRD) of the FOS gene in the cytoplasm. In the presence of ZNF335, enhances ligand-dependent transcriptional activity of nuclear hormone receptors, including RARA. The increase of ligand-dependent ESR1-mediated transcription is much smaller, if any. Mediates cell proliferation and cell survival and prevents cellular senescence.</text>
</comment>
<comment type="catalytic activity">
    <reaction evidence="4 9">
        <text>Exonucleolytic cleavage of poly(A) to 5'-AMP.</text>
        <dbReference type="EC" id="3.1.13.4"/>
    </reaction>
</comment>
<comment type="cofactor">
    <cofactor evidence="2">
        <name>Mg(2+)</name>
        <dbReference type="ChEBI" id="CHEBI:18420"/>
    </cofactor>
    <text evidence="2">Binds 2 magnesium ions, but the ions interact each with only 1 or 2 residues.</text>
</comment>
<comment type="subunit">
    <text evidence="3 5 6 7 8">Component of the CCR4-NOT complex; distinct complexes seem to exist that differ in the participation of probably mutually exclusive catalytic subunits; the complex contains two deadenylase subunits, CNOT6 or CNOT6L, and CNOT7 or CNOT8 (PubMed:19558367). Interacts with CNOT7 and CNOT8 (PubMed:11747467). Interacts with UNR (PubMed:15314026). Interacts with ZFP36L1 (via N-terminus) (PubMed:15687258). Interacts with ZNF335 (PubMed:18180299).</text>
</comment>
<comment type="interaction">
    <interactant intactId="EBI-2104530">
        <id>Q9ULM6</id>
    </interactant>
    <interactant intactId="EBI-1222758">
        <id>A5YKK6</id>
        <label>CNOT1</label>
    </interactant>
    <organismsDiffer>false</organismsDiffer>
    <experiments>3</experiments>
</comment>
<comment type="interaction">
    <interactant intactId="EBI-2104530">
        <id>Q9ULM6</id>
    </interactant>
    <interactant intactId="EBI-1054261">
        <id>Q9H9A5</id>
        <label>CNOT10</label>
    </interactant>
    <organismsDiffer>false</organismsDiffer>
    <experiments>3</experiments>
</comment>
<comment type="interaction">
    <interactant intactId="EBI-2104530">
        <id>Q9ULM6</id>
    </interactant>
    <interactant intactId="EBI-743073">
        <id>O75175</id>
        <label>CNOT3</label>
    </interactant>
    <organismsDiffer>false</organismsDiffer>
    <experiments>3</experiments>
</comment>
<comment type="interaction">
    <interactant intactId="EBI-2104530">
        <id>Q9ULM6</id>
    </interactant>
    <interactant intactId="EBI-2105113">
        <id>Q9UIV1</id>
        <label>CNOT7</label>
    </interactant>
    <organismsDiffer>false</organismsDiffer>
    <experiments>4</experiments>
</comment>
<comment type="interaction">
    <interactant intactId="EBI-2104530">
        <id>Q9ULM6</id>
    </interactant>
    <interactant intactId="EBI-742299">
        <id>Q9UFF9</id>
        <label>CNOT8</label>
    </interactant>
    <organismsDiffer>false</organismsDiffer>
    <experiments>2</experiments>
</comment>
<comment type="interaction">
    <interactant intactId="EBI-2104530">
        <id>Q9ULM6</id>
    </interactant>
    <interactant intactId="EBI-2562092">
        <id>Q86TB9</id>
        <label>PATL1</label>
    </interactant>
    <organismsDiffer>false</organismsDiffer>
    <experiments>3</experiments>
</comment>
<comment type="interaction">
    <interactant intactId="EBI-2104530">
        <id>Q9ULM6</id>
    </interactant>
    <interactant intactId="EBI-6507625">
        <id>Q9HCJ0</id>
        <label>TNRC6C</label>
    </interactant>
    <organismsDiffer>false</organismsDiffer>
    <experiments>2</experiments>
</comment>
<comment type="subcellular location">
    <subcellularLocation>
        <location evidence="2">Cytoplasm</location>
    </subcellularLocation>
    <subcellularLocation>
        <location evidence="2">Nucleus</location>
    </subcellularLocation>
    <text evidence="2">Predominantly cytoplasmic.</text>
</comment>
<comment type="similarity">
    <text evidence="11">Belongs to the CCR4/nocturin family.</text>
</comment>